<protein>
    <recommendedName>
        <fullName evidence="1">Chaperone protein HscA homolog</fullName>
    </recommendedName>
</protein>
<reference key="1">
    <citation type="submission" date="2007-09" db="EMBL/GenBank/DDBJ databases">
        <title>Complete genome sequence of Rickettsia rickettsii.</title>
        <authorList>
            <person name="Madan A."/>
            <person name="Fahey J."/>
            <person name="Helton E."/>
            <person name="Ketteman M."/>
            <person name="Madan A."/>
            <person name="Rodrigues S."/>
            <person name="Sanchez A."/>
            <person name="Dasch G."/>
            <person name="Eremeeva M."/>
        </authorList>
    </citation>
    <scope>NUCLEOTIDE SEQUENCE [LARGE SCALE GENOMIC DNA]</scope>
    <source>
        <strain>Sheila Smith</strain>
    </source>
</reference>
<gene>
    <name evidence="1" type="primary">hscA</name>
    <name type="ordered locus">A1G_01500</name>
</gene>
<sequence length="595" mass="65994">MQIIEIREPEQADFKPEQQIAVGIDFGTTNSLIAIAANRKVKVIKSIDDKELIPTTIDFTSNNFTIGNNKGLRSIKRLFGKTLKEILNTPALFSLVKDYLDVNSSELKLNFANKQLRVPEIAAEIFIYLKNQAEEQLKTNLTKAVITVPAHFNDAARGEVMLAAKIAGFEVLRLIAEPTAAAYAYGLNKNQKGCYLVYDLGGGTFDVSILNIQEGIFQVIATNGDNMLGGNDIDVVITQYLCNKFDLPNSIDTLQLAKKAKETLTYKDSFNNDNVSINKQTLEQLILPLVERTINIAQECLEQAGNPNIDGVILVGGATRTPLIKDELYKAFKIDILSDIDPDKAVVWGAALQAENLIAPHTNSLLIDVAPLSLGMELYGGIVEKIIMHNTPIPISVVKEFTTYVDNQTGIQFHILQGEREMAADCRSLARFELKGLPPMKAGYIRAEVTFSIDADGILSVSAYEKISNTSHAIEVKPNHGIDKTEIDIMLENAYKNAKIDYTTRLLQEAVIEAEAFIFSIERAIAEFTTLLSESEISIINSLLDNIKEAVHARDWILINNSIKEFKSKIKKSMDTKFNVIINDLLKGKNINQIK</sequence>
<feature type="chain" id="PRO_1000044882" description="Chaperone protein HscA homolog">
    <location>
        <begin position="1"/>
        <end position="595"/>
    </location>
</feature>
<evidence type="ECO:0000255" key="1">
    <source>
        <dbReference type="HAMAP-Rule" id="MF_00679"/>
    </source>
</evidence>
<comment type="function">
    <text evidence="1">Chaperone involved in the maturation of iron-sulfur cluster-containing proteins. Has a low intrinsic ATPase activity which is markedly stimulated by HscB.</text>
</comment>
<comment type="similarity">
    <text evidence="1">Belongs to the heat shock protein 70 family.</text>
</comment>
<name>HSCA_RICRS</name>
<organism>
    <name type="scientific">Rickettsia rickettsii (strain Sheila Smith)</name>
    <dbReference type="NCBI Taxonomy" id="392021"/>
    <lineage>
        <taxon>Bacteria</taxon>
        <taxon>Pseudomonadati</taxon>
        <taxon>Pseudomonadota</taxon>
        <taxon>Alphaproteobacteria</taxon>
        <taxon>Rickettsiales</taxon>
        <taxon>Rickettsiaceae</taxon>
        <taxon>Rickettsieae</taxon>
        <taxon>Rickettsia</taxon>
        <taxon>spotted fever group</taxon>
    </lineage>
</organism>
<proteinExistence type="inferred from homology"/>
<accession>A8GR49</accession>
<dbReference type="EMBL" id="CP000848">
    <property type="protein sequence ID" value="ABV75874.1"/>
    <property type="molecule type" value="Genomic_DNA"/>
</dbReference>
<dbReference type="RefSeq" id="WP_012150479.1">
    <property type="nucleotide sequence ID" value="NZ_CP121767.1"/>
</dbReference>
<dbReference type="SMR" id="A8GR49"/>
<dbReference type="GeneID" id="79937046"/>
<dbReference type="KEGG" id="rri:A1G_01500"/>
<dbReference type="HOGENOM" id="CLU_005965_2_4_5"/>
<dbReference type="Proteomes" id="UP000006832">
    <property type="component" value="Chromosome"/>
</dbReference>
<dbReference type="GO" id="GO:0005524">
    <property type="term" value="F:ATP binding"/>
    <property type="evidence" value="ECO:0007669"/>
    <property type="project" value="UniProtKB-KW"/>
</dbReference>
<dbReference type="GO" id="GO:0016887">
    <property type="term" value="F:ATP hydrolysis activity"/>
    <property type="evidence" value="ECO:0007669"/>
    <property type="project" value="UniProtKB-UniRule"/>
</dbReference>
<dbReference type="GO" id="GO:0140662">
    <property type="term" value="F:ATP-dependent protein folding chaperone"/>
    <property type="evidence" value="ECO:0007669"/>
    <property type="project" value="InterPro"/>
</dbReference>
<dbReference type="GO" id="GO:0051082">
    <property type="term" value="F:unfolded protein binding"/>
    <property type="evidence" value="ECO:0007669"/>
    <property type="project" value="InterPro"/>
</dbReference>
<dbReference type="GO" id="GO:0016226">
    <property type="term" value="P:iron-sulfur cluster assembly"/>
    <property type="evidence" value="ECO:0007669"/>
    <property type="project" value="InterPro"/>
</dbReference>
<dbReference type="FunFam" id="1.20.1270.10:FF:000058">
    <property type="entry name" value="Chaperone protein HscA homolog"/>
    <property type="match status" value="1"/>
</dbReference>
<dbReference type="Gene3D" id="1.20.1270.10">
    <property type="match status" value="1"/>
</dbReference>
<dbReference type="Gene3D" id="3.30.420.40">
    <property type="match status" value="2"/>
</dbReference>
<dbReference type="Gene3D" id="3.90.640.10">
    <property type="entry name" value="Actin, Chain A, domain 4"/>
    <property type="match status" value="1"/>
</dbReference>
<dbReference type="Gene3D" id="2.60.34.10">
    <property type="entry name" value="Substrate Binding Domain Of DNAk, Chain A, domain 1"/>
    <property type="match status" value="1"/>
</dbReference>
<dbReference type="HAMAP" id="MF_00679">
    <property type="entry name" value="HscA"/>
    <property type="match status" value="1"/>
</dbReference>
<dbReference type="InterPro" id="IPR043129">
    <property type="entry name" value="ATPase_NBD"/>
</dbReference>
<dbReference type="InterPro" id="IPR018181">
    <property type="entry name" value="Heat_shock_70_CS"/>
</dbReference>
<dbReference type="InterPro" id="IPR029048">
    <property type="entry name" value="HSP70_C_sf"/>
</dbReference>
<dbReference type="InterPro" id="IPR029047">
    <property type="entry name" value="HSP70_peptide-bd_sf"/>
</dbReference>
<dbReference type="InterPro" id="IPR013126">
    <property type="entry name" value="Hsp_70_fam"/>
</dbReference>
<dbReference type="InterPro" id="IPR010236">
    <property type="entry name" value="ISC_FeS_clus_asmbl_HscA"/>
</dbReference>
<dbReference type="NCBIfam" id="NF002399">
    <property type="entry name" value="PRK01433.1"/>
    <property type="match status" value="1"/>
</dbReference>
<dbReference type="PANTHER" id="PTHR19375">
    <property type="entry name" value="HEAT SHOCK PROTEIN 70KDA"/>
    <property type="match status" value="1"/>
</dbReference>
<dbReference type="Pfam" id="PF00012">
    <property type="entry name" value="HSP70"/>
    <property type="match status" value="1"/>
</dbReference>
<dbReference type="PRINTS" id="PR00301">
    <property type="entry name" value="HEATSHOCK70"/>
</dbReference>
<dbReference type="SUPFAM" id="SSF53067">
    <property type="entry name" value="Actin-like ATPase domain"/>
    <property type="match status" value="2"/>
</dbReference>
<dbReference type="SUPFAM" id="SSF100934">
    <property type="entry name" value="Heat shock protein 70kD (HSP70), C-terminal subdomain"/>
    <property type="match status" value="1"/>
</dbReference>
<dbReference type="SUPFAM" id="SSF100920">
    <property type="entry name" value="Heat shock protein 70kD (HSP70), peptide-binding domain"/>
    <property type="match status" value="1"/>
</dbReference>
<dbReference type="PROSITE" id="PS00329">
    <property type="entry name" value="HSP70_2"/>
    <property type="match status" value="1"/>
</dbReference>
<keyword id="KW-0067">ATP-binding</keyword>
<keyword id="KW-0143">Chaperone</keyword>
<keyword id="KW-0547">Nucleotide-binding</keyword>